<organism>
    <name type="scientific">Prosthecochloris aestuarii (strain DSM 271 / SK 413)</name>
    <dbReference type="NCBI Taxonomy" id="290512"/>
    <lineage>
        <taxon>Bacteria</taxon>
        <taxon>Pseudomonadati</taxon>
        <taxon>Chlorobiota</taxon>
        <taxon>Chlorobiia</taxon>
        <taxon>Chlorobiales</taxon>
        <taxon>Chlorobiaceae</taxon>
        <taxon>Prosthecochloris</taxon>
    </lineage>
</organism>
<keyword id="KW-0997">Cell inner membrane</keyword>
<keyword id="KW-1003">Cell membrane</keyword>
<keyword id="KW-0472">Membrane</keyword>
<keyword id="KW-0812">Transmembrane</keyword>
<keyword id="KW-1133">Transmembrane helix</keyword>
<proteinExistence type="inferred from homology"/>
<dbReference type="EMBL" id="CP001108">
    <property type="protein sequence ID" value="ACF46491.1"/>
    <property type="molecule type" value="Genomic_DNA"/>
</dbReference>
<dbReference type="RefSeq" id="WP_012506024.1">
    <property type="nucleotide sequence ID" value="NC_011059.1"/>
</dbReference>
<dbReference type="SMR" id="B4S8V4"/>
<dbReference type="STRING" id="290512.Paes_1471"/>
<dbReference type="KEGG" id="paa:Paes_1471"/>
<dbReference type="eggNOG" id="COG1295">
    <property type="taxonomic scope" value="Bacteria"/>
</dbReference>
<dbReference type="HOGENOM" id="CLU_032288_1_0_10"/>
<dbReference type="Proteomes" id="UP000002725">
    <property type="component" value="Chromosome"/>
</dbReference>
<dbReference type="GO" id="GO:0005886">
    <property type="term" value="C:plasma membrane"/>
    <property type="evidence" value="ECO:0007669"/>
    <property type="project" value="UniProtKB-SubCell"/>
</dbReference>
<dbReference type="HAMAP" id="MF_00672">
    <property type="entry name" value="UPF0761"/>
    <property type="match status" value="1"/>
</dbReference>
<dbReference type="InterPro" id="IPR023679">
    <property type="entry name" value="UPF0761_bac"/>
</dbReference>
<dbReference type="InterPro" id="IPR017039">
    <property type="entry name" value="Virul_fac_BrkB"/>
</dbReference>
<dbReference type="NCBIfam" id="TIGR00765">
    <property type="entry name" value="yihY_not_rbn"/>
    <property type="match status" value="1"/>
</dbReference>
<dbReference type="PANTHER" id="PTHR30213">
    <property type="entry name" value="INNER MEMBRANE PROTEIN YHJD"/>
    <property type="match status" value="1"/>
</dbReference>
<dbReference type="PANTHER" id="PTHR30213:SF0">
    <property type="entry name" value="UPF0761 MEMBRANE PROTEIN YIHY"/>
    <property type="match status" value="1"/>
</dbReference>
<dbReference type="Pfam" id="PF03631">
    <property type="entry name" value="Virul_fac_BrkB"/>
    <property type="match status" value="1"/>
</dbReference>
<reference key="1">
    <citation type="submission" date="2008-06" db="EMBL/GenBank/DDBJ databases">
        <title>Complete sequence of chromosome of Prosthecochloris aestuarii DSM 271.</title>
        <authorList>
            <consortium name="US DOE Joint Genome Institute"/>
            <person name="Lucas S."/>
            <person name="Copeland A."/>
            <person name="Lapidus A."/>
            <person name="Glavina del Rio T."/>
            <person name="Dalin E."/>
            <person name="Tice H."/>
            <person name="Bruce D."/>
            <person name="Goodwin L."/>
            <person name="Pitluck S."/>
            <person name="Schmutz J."/>
            <person name="Larimer F."/>
            <person name="Land M."/>
            <person name="Hauser L."/>
            <person name="Kyrpides N."/>
            <person name="Anderson I."/>
            <person name="Liu Z."/>
            <person name="Li T."/>
            <person name="Zhao F."/>
            <person name="Overmann J."/>
            <person name="Bryant D.A."/>
            <person name="Richardson P."/>
        </authorList>
    </citation>
    <scope>NUCLEOTIDE SEQUENCE [LARGE SCALE GENOMIC DNA]</scope>
    <source>
        <strain>DSM 271 / SK 413</strain>
    </source>
</reference>
<accession>B4S8V4</accession>
<name>Y1471_PROA2</name>
<sequence>MPSSEHSFISVPHDALRSVRSFLAFFSKSFNRDQVLLSAGSLAFQTLLSIVPLMAVILSVLSVSPVFDSFKQYVEEFIFQNFLPASGVEVQEYLWQFISKTSSVPTIGGLSLFIIALFLISTIDHTLNRIWGVDAPRKFFQGFTLYWTVLTLGPIFIGSSLVATSYVWYNFFTQGALADVQAKTLLLLPVMNTFLAFFLLYILVPNRKVKFVHAFSGAILATLLFEFSKRWFAFYVSHVATFEHIYGALSVIPLLFFWIYLIWVVALSGAEFVYCLGVVHPERAVVREFHPLLGISAVLLVIERISAAQSSGGFLTMNTLEDLCRSVTRMQLRRITDFLLQQNIIHKTEEGSFALSADLHTLTLYDLYAILPADLVQPKDPETSDSHFGQDLSGLEQNIIQCLQHAMHQPLAAFLNTATRTL</sequence>
<gene>
    <name type="ordered locus">Paes_1471</name>
</gene>
<protein>
    <recommendedName>
        <fullName evidence="1">UPF0761 membrane protein Paes_1471</fullName>
    </recommendedName>
</protein>
<comment type="subcellular location">
    <subcellularLocation>
        <location evidence="1">Cell inner membrane</location>
        <topology evidence="1">Multi-pass membrane protein</topology>
    </subcellularLocation>
</comment>
<comment type="similarity">
    <text evidence="1">Belongs to the UPF0761 family.</text>
</comment>
<feature type="chain" id="PRO_0000391045" description="UPF0761 membrane protein Paes_1471">
    <location>
        <begin position="1"/>
        <end position="422"/>
    </location>
</feature>
<feature type="transmembrane region" description="Helical" evidence="1">
    <location>
        <begin position="47"/>
        <end position="67"/>
    </location>
</feature>
<feature type="transmembrane region" description="Helical" evidence="1">
    <location>
        <begin position="103"/>
        <end position="123"/>
    </location>
</feature>
<feature type="transmembrane region" description="Helical" evidence="1">
    <location>
        <begin position="143"/>
        <end position="163"/>
    </location>
</feature>
<feature type="transmembrane region" description="Helical" evidence="1">
    <location>
        <begin position="185"/>
        <end position="205"/>
    </location>
</feature>
<feature type="transmembrane region" description="Helical" evidence="1">
    <location>
        <begin position="208"/>
        <end position="228"/>
    </location>
</feature>
<feature type="transmembrane region" description="Helical" evidence="1">
    <location>
        <begin position="247"/>
        <end position="267"/>
    </location>
</feature>
<evidence type="ECO:0000255" key="1">
    <source>
        <dbReference type="HAMAP-Rule" id="MF_00672"/>
    </source>
</evidence>